<accession>A0L8B5</accession>
<evidence type="ECO:0000255" key="1">
    <source>
        <dbReference type="HAMAP-Rule" id="MF_01858"/>
    </source>
</evidence>
<comment type="function">
    <text evidence="1">Specifically methylates the guanine in position 2445 (m2G2445) and the guanine in position 2069 (m7G2069) of 23S rRNA.</text>
</comment>
<comment type="catalytic activity">
    <reaction evidence="1">
        <text>guanosine(2445) in 23S rRNA + S-adenosyl-L-methionine = N(2)-methylguanosine(2445) in 23S rRNA + S-adenosyl-L-homocysteine + H(+)</text>
        <dbReference type="Rhea" id="RHEA:42740"/>
        <dbReference type="Rhea" id="RHEA-COMP:10215"/>
        <dbReference type="Rhea" id="RHEA-COMP:10216"/>
        <dbReference type="ChEBI" id="CHEBI:15378"/>
        <dbReference type="ChEBI" id="CHEBI:57856"/>
        <dbReference type="ChEBI" id="CHEBI:59789"/>
        <dbReference type="ChEBI" id="CHEBI:74269"/>
        <dbReference type="ChEBI" id="CHEBI:74481"/>
        <dbReference type="EC" id="2.1.1.173"/>
    </reaction>
</comment>
<comment type="catalytic activity">
    <reaction evidence="1">
        <text>guanosine(2069) in 23S rRNA + S-adenosyl-L-methionine = N(2)-methylguanosine(2069) in 23S rRNA + S-adenosyl-L-homocysteine + H(+)</text>
        <dbReference type="Rhea" id="RHEA:43772"/>
        <dbReference type="Rhea" id="RHEA-COMP:10688"/>
        <dbReference type="Rhea" id="RHEA-COMP:10689"/>
        <dbReference type="ChEBI" id="CHEBI:15378"/>
        <dbReference type="ChEBI" id="CHEBI:57856"/>
        <dbReference type="ChEBI" id="CHEBI:59789"/>
        <dbReference type="ChEBI" id="CHEBI:74269"/>
        <dbReference type="ChEBI" id="CHEBI:74481"/>
        <dbReference type="EC" id="2.1.1.264"/>
    </reaction>
</comment>
<comment type="subcellular location">
    <subcellularLocation>
        <location evidence="1">Cytoplasm</location>
    </subcellularLocation>
</comment>
<comment type="similarity">
    <text evidence="1">Belongs to the methyltransferase superfamily. RlmKL family.</text>
</comment>
<reference key="1">
    <citation type="journal article" date="2009" name="Appl. Environ. Microbiol.">
        <title>Complete genome sequence of the chemolithoautotrophic marine magnetotactic coccus strain MC-1.</title>
        <authorList>
            <person name="Schubbe S."/>
            <person name="Williams T.J."/>
            <person name="Xie G."/>
            <person name="Kiss H.E."/>
            <person name="Brettin T.S."/>
            <person name="Martinez D."/>
            <person name="Ross C.A."/>
            <person name="Schuler D."/>
            <person name="Cox B.L."/>
            <person name="Nealson K.H."/>
            <person name="Bazylinski D.A."/>
        </authorList>
    </citation>
    <scope>NUCLEOTIDE SEQUENCE [LARGE SCALE GENOMIC DNA]</scope>
    <source>
        <strain>ATCC BAA-1437 / JCM 17883 / MC-1</strain>
    </source>
</reference>
<sequence>MYRYFATTARGLEPALAAELKRMGAKSVRPASAGVGFEGDLEIGLRACLWSRVATRIILSLKKIDVSTPEALYASVLEIPWEDHLDAEGTLSVDCIGTNDTIRHTNFGGQKLKDAVVDRIRDKKGSRPSVARERPDLRINLGIRGNEGRVGIDLSGEGLHRRGYRLRTGDAPLKENLAAALLYFAGWEEQARLGAPFVDPMCGSGTLPIEAAMMAGDIAPGSLRRYFGFRRWRGASGIAELWQRLADESIERQNQAKMPIIEAGDSDANMVHIAQANIEEAELEGHIRLHQRDVAAWQKGADWPDRPGVLVTNPPYGERLGEVVELKGLFAKLGMLLNGPLLGWRSGVLMGDVLWQSAMGLPQQGQRMDLNNGPIPCAYILHGTEPKPQAAKGAPAPKPGLQQGVVSPENAQMFANRLKKNQKRLKKWVTRENVRCYRLYDADMPEYALAVDRYEEWVVVQEYQAPSSIPDADAHRRLQDACSVLPEVLGVPPERVVVKQRKRQKGYNQYDKMANRGQKVLVAEQGLNFEVNLTDYLDTGLFPDHAPMRRRIQQEAANRRFLNLFCYTGTATVHAAAGGALTTTSVDLSNTYLEWAQRNMELNGFKGEHQHRFIKANCMQWIATTDQTFDLIFLDPPTFSNSKSMLESFDIQRDQVTLIGGVARLLNPDGVLYFSTNRKKFKLEQDLLSAQNLHMEEITQQTLDPDFHREPPIHRCWRITCA</sequence>
<feature type="chain" id="PRO_0000366773" description="Ribosomal RNA large subunit methyltransferase K/L">
    <location>
        <begin position="1"/>
        <end position="722"/>
    </location>
</feature>
<feature type="domain" description="THUMP" evidence="1">
    <location>
        <begin position="43"/>
        <end position="154"/>
    </location>
</feature>
<keyword id="KW-0963">Cytoplasm</keyword>
<keyword id="KW-0489">Methyltransferase</keyword>
<keyword id="KW-1185">Reference proteome</keyword>
<keyword id="KW-0694">RNA-binding</keyword>
<keyword id="KW-0698">rRNA processing</keyword>
<keyword id="KW-0949">S-adenosyl-L-methionine</keyword>
<keyword id="KW-0808">Transferase</keyword>
<proteinExistence type="inferred from homology"/>
<dbReference type="EC" id="2.1.1.173" evidence="1"/>
<dbReference type="EC" id="2.1.1.264" evidence="1"/>
<dbReference type="EMBL" id="CP000471">
    <property type="protein sequence ID" value="ABK44208.1"/>
    <property type="molecule type" value="Genomic_DNA"/>
</dbReference>
<dbReference type="RefSeq" id="WP_011713356.1">
    <property type="nucleotide sequence ID" value="NC_008576.1"/>
</dbReference>
<dbReference type="SMR" id="A0L8B5"/>
<dbReference type="STRING" id="156889.Mmc1_1699"/>
<dbReference type="KEGG" id="mgm:Mmc1_1699"/>
<dbReference type="eggNOG" id="COG0116">
    <property type="taxonomic scope" value="Bacteria"/>
</dbReference>
<dbReference type="eggNOG" id="COG1092">
    <property type="taxonomic scope" value="Bacteria"/>
</dbReference>
<dbReference type="HOGENOM" id="CLU_014042_2_0_5"/>
<dbReference type="OrthoDB" id="9809404at2"/>
<dbReference type="Proteomes" id="UP000002586">
    <property type="component" value="Chromosome"/>
</dbReference>
<dbReference type="GO" id="GO:0005737">
    <property type="term" value="C:cytoplasm"/>
    <property type="evidence" value="ECO:0007669"/>
    <property type="project" value="UniProtKB-SubCell"/>
</dbReference>
<dbReference type="GO" id="GO:0052915">
    <property type="term" value="F:23S rRNA (guanine(2445)-N(2))-methyltransferase activity"/>
    <property type="evidence" value="ECO:0007669"/>
    <property type="project" value="UniProtKB-UniRule"/>
</dbReference>
<dbReference type="GO" id="GO:0003723">
    <property type="term" value="F:RNA binding"/>
    <property type="evidence" value="ECO:0007669"/>
    <property type="project" value="UniProtKB-KW"/>
</dbReference>
<dbReference type="GO" id="GO:0070043">
    <property type="term" value="F:rRNA (guanine-N7-)-methyltransferase activity"/>
    <property type="evidence" value="ECO:0007669"/>
    <property type="project" value="UniProtKB-UniRule"/>
</dbReference>
<dbReference type="CDD" id="cd02440">
    <property type="entry name" value="AdoMet_MTases"/>
    <property type="match status" value="1"/>
</dbReference>
<dbReference type="CDD" id="cd11715">
    <property type="entry name" value="THUMP_AdoMetMT"/>
    <property type="match status" value="1"/>
</dbReference>
<dbReference type="Gene3D" id="3.30.2130.30">
    <property type="match status" value="1"/>
</dbReference>
<dbReference type="Gene3D" id="3.30.750.80">
    <property type="entry name" value="RNA methyltransferase domain (HRMD) like"/>
    <property type="match status" value="1"/>
</dbReference>
<dbReference type="Gene3D" id="3.40.50.150">
    <property type="entry name" value="Vaccinia Virus protein VP39"/>
    <property type="match status" value="2"/>
</dbReference>
<dbReference type="HAMAP" id="MF_01858">
    <property type="entry name" value="23SrRNA_methyltr_KL"/>
    <property type="match status" value="1"/>
</dbReference>
<dbReference type="InterPro" id="IPR017244">
    <property type="entry name" value="23SrRNA_methyltr_KL"/>
</dbReference>
<dbReference type="InterPro" id="IPR000241">
    <property type="entry name" value="RlmKL-like_Mtase"/>
</dbReference>
<dbReference type="InterPro" id="IPR053943">
    <property type="entry name" value="RlmKL-like_Mtase_CS"/>
</dbReference>
<dbReference type="InterPro" id="IPR054170">
    <property type="entry name" value="RlmL_1st"/>
</dbReference>
<dbReference type="InterPro" id="IPR019614">
    <property type="entry name" value="SAM-dep_methyl-trfase"/>
</dbReference>
<dbReference type="InterPro" id="IPR029063">
    <property type="entry name" value="SAM-dependent_MTases_sf"/>
</dbReference>
<dbReference type="InterPro" id="IPR004114">
    <property type="entry name" value="THUMP_dom"/>
</dbReference>
<dbReference type="NCBIfam" id="NF008748">
    <property type="entry name" value="PRK11783.1"/>
    <property type="match status" value="1"/>
</dbReference>
<dbReference type="PANTHER" id="PTHR47313">
    <property type="entry name" value="RIBOSOMAL RNA LARGE SUBUNIT METHYLTRANSFERASE K/L"/>
    <property type="match status" value="1"/>
</dbReference>
<dbReference type="PANTHER" id="PTHR47313:SF1">
    <property type="entry name" value="RIBOSOMAL RNA LARGE SUBUNIT METHYLTRANSFERASE K_L"/>
    <property type="match status" value="1"/>
</dbReference>
<dbReference type="Pfam" id="PF10672">
    <property type="entry name" value="Methyltrans_SAM"/>
    <property type="match status" value="1"/>
</dbReference>
<dbReference type="Pfam" id="PF22020">
    <property type="entry name" value="RlmL_1st"/>
    <property type="match status" value="1"/>
</dbReference>
<dbReference type="Pfam" id="PF02926">
    <property type="entry name" value="THUMP"/>
    <property type="match status" value="1"/>
</dbReference>
<dbReference type="Pfam" id="PF01170">
    <property type="entry name" value="UPF0020"/>
    <property type="match status" value="1"/>
</dbReference>
<dbReference type="PIRSF" id="PIRSF037618">
    <property type="entry name" value="RNA_Mtase_bacteria_prd"/>
    <property type="match status" value="1"/>
</dbReference>
<dbReference type="SMART" id="SM00981">
    <property type="entry name" value="THUMP"/>
    <property type="match status" value="1"/>
</dbReference>
<dbReference type="SUPFAM" id="SSF53335">
    <property type="entry name" value="S-adenosyl-L-methionine-dependent methyltransferases"/>
    <property type="match status" value="2"/>
</dbReference>
<dbReference type="PROSITE" id="PS51165">
    <property type="entry name" value="THUMP"/>
    <property type="match status" value="1"/>
</dbReference>
<dbReference type="PROSITE" id="PS01261">
    <property type="entry name" value="UPF0020"/>
    <property type="match status" value="1"/>
</dbReference>
<organism>
    <name type="scientific">Magnetococcus marinus (strain ATCC BAA-1437 / JCM 17883 / MC-1)</name>
    <dbReference type="NCBI Taxonomy" id="156889"/>
    <lineage>
        <taxon>Bacteria</taxon>
        <taxon>Pseudomonadati</taxon>
        <taxon>Pseudomonadota</taxon>
        <taxon>Alphaproteobacteria</taxon>
        <taxon>Magnetococcales</taxon>
        <taxon>Magnetococcaceae</taxon>
        <taxon>Magnetococcus</taxon>
    </lineage>
</organism>
<name>RLMKL_MAGMM</name>
<protein>
    <recommendedName>
        <fullName evidence="1">Ribosomal RNA large subunit methyltransferase K/L</fullName>
    </recommendedName>
    <domain>
        <recommendedName>
            <fullName evidence="1">23S rRNA m2G2445 methyltransferase</fullName>
            <ecNumber evidence="1">2.1.1.173</ecNumber>
        </recommendedName>
        <alternativeName>
            <fullName evidence="1">rRNA (guanine-N(2)-)-methyltransferase RlmL</fullName>
        </alternativeName>
    </domain>
    <domain>
        <recommendedName>
            <fullName evidence="1">23S rRNA m7G2069 methyltransferase</fullName>
            <ecNumber evidence="1">2.1.1.264</ecNumber>
        </recommendedName>
        <alternativeName>
            <fullName evidence="1">rRNA (guanine-N(7)-)-methyltransferase RlmK</fullName>
        </alternativeName>
    </domain>
</protein>
<gene>
    <name evidence="1" type="primary">rlmL</name>
    <name type="ordered locus">Mmc1_1699</name>
</gene>